<dbReference type="EC" id="7.1.1.-" evidence="1"/>
<dbReference type="EMBL" id="AP008231">
    <property type="protein sequence ID" value="BAD78560.1"/>
    <property type="status" value="ALT_INIT"/>
    <property type="molecule type" value="Genomic_DNA"/>
</dbReference>
<dbReference type="SMR" id="Q5N559"/>
<dbReference type="KEGG" id="syc:syc0370_c"/>
<dbReference type="eggNOG" id="COG0838">
    <property type="taxonomic scope" value="Bacteria"/>
</dbReference>
<dbReference type="Proteomes" id="UP000001175">
    <property type="component" value="Chromosome"/>
</dbReference>
<dbReference type="GO" id="GO:0030964">
    <property type="term" value="C:NADH dehydrogenase complex"/>
    <property type="evidence" value="ECO:0007669"/>
    <property type="project" value="TreeGrafter"/>
</dbReference>
<dbReference type="GO" id="GO:0031676">
    <property type="term" value="C:plasma membrane-derived thylakoid membrane"/>
    <property type="evidence" value="ECO:0007669"/>
    <property type="project" value="UniProtKB-SubCell"/>
</dbReference>
<dbReference type="GO" id="GO:0008137">
    <property type="term" value="F:NADH dehydrogenase (ubiquinone) activity"/>
    <property type="evidence" value="ECO:0007669"/>
    <property type="project" value="InterPro"/>
</dbReference>
<dbReference type="GO" id="GO:0048038">
    <property type="term" value="F:quinone binding"/>
    <property type="evidence" value="ECO:0007669"/>
    <property type="project" value="UniProtKB-KW"/>
</dbReference>
<dbReference type="GO" id="GO:0019684">
    <property type="term" value="P:photosynthesis, light reaction"/>
    <property type="evidence" value="ECO:0007669"/>
    <property type="project" value="UniProtKB-UniRule"/>
</dbReference>
<dbReference type="FunFam" id="1.20.58.1610:FF:000001">
    <property type="entry name" value="NAD(P)H-quinone oxidoreductase subunit 3, chloroplastic"/>
    <property type="match status" value="1"/>
</dbReference>
<dbReference type="Gene3D" id="1.20.58.1610">
    <property type="entry name" value="NADH:ubiquinone/plastoquinone oxidoreductase, chain 3"/>
    <property type="match status" value="1"/>
</dbReference>
<dbReference type="HAMAP" id="MF_01394">
    <property type="entry name" value="NDH1_NuoA"/>
    <property type="match status" value="1"/>
</dbReference>
<dbReference type="InterPro" id="IPR023043">
    <property type="entry name" value="NAD(P)H_OxRDtase_bac/plastid"/>
</dbReference>
<dbReference type="InterPro" id="IPR000440">
    <property type="entry name" value="NADH_UbQ/plastoQ_OxRdtase_su3"/>
</dbReference>
<dbReference type="InterPro" id="IPR038430">
    <property type="entry name" value="NDAH_ubi_oxred_su3_sf"/>
</dbReference>
<dbReference type="PANTHER" id="PTHR11058">
    <property type="entry name" value="NADH-UBIQUINONE OXIDOREDUCTASE CHAIN 3"/>
    <property type="match status" value="1"/>
</dbReference>
<dbReference type="PANTHER" id="PTHR11058:SF9">
    <property type="entry name" value="NADH-UBIQUINONE OXIDOREDUCTASE CHAIN 3"/>
    <property type="match status" value="1"/>
</dbReference>
<dbReference type="Pfam" id="PF00507">
    <property type="entry name" value="Oxidored_q4"/>
    <property type="match status" value="1"/>
</dbReference>
<evidence type="ECO:0000255" key="1">
    <source>
        <dbReference type="HAMAP-Rule" id="MF_01394"/>
    </source>
</evidence>
<evidence type="ECO:0000305" key="2"/>
<organism>
    <name type="scientific">Synechococcus sp. (strain ATCC 27144 / PCC 6301 / SAUG 1402/1)</name>
    <name type="common">Anacystis nidulans</name>
    <dbReference type="NCBI Taxonomy" id="269084"/>
    <lineage>
        <taxon>Bacteria</taxon>
        <taxon>Bacillati</taxon>
        <taxon>Cyanobacteriota</taxon>
        <taxon>Cyanophyceae</taxon>
        <taxon>Synechococcales</taxon>
        <taxon>Synechococcaceae</taxon>
        <taxon>Synechococcus</taxon>
    </lineage>
</organism>
<name>NU3C_SYNP6</name>
<proteinExistence type="inferred from homology"/>
<accession>Q5N559</accession>
<comment type="function">
    <text evidence="1">NDH-1 shuttles electrons from an unknown electron donor, via FMN and iron-sulfur (Fe-S) centers, to quinones in the respiratory and/or the photosynthetic chain. The immediate electron acceptor for the enzyme in this species is believed to be plastoquinone. Couples the redox reaction to proton translocation, and thus conserves the redox energy in a proton gradient. Cyanobacterial NDH-1 also plays a role in inorganic carbon-concentration.</text>
</comment>
<comment type="catalytic activity">
    <reaction evidence="1">
        <text>a plastoquinone + NADH + (n+1) H(+)(in) = a plastoquinol + NAD(+) + n H(+)(out)</text>
        <dbReference type="Rhea" id="RHEA:42608"/>
        <dbReference type="Rhea" id="RHEA-COMP:9561"/>
        <dbReference type="Rhea" id="RHEA-COMP:9562"/>
        <dbReference type="ChEBI" id="CHEBI:15378"/>
        <dbReference type="ChEBI" id="CHEBI:17757"/>
        <dbReference type="ChEBI" id="CHEBI:57540"/>
        <dbReference type="ChEBI" id="CHEBI:57945"/>
        <dbReference type="ChEBI" id="CHEBI:62192"/>
    </reaction>
</comment>
<comment type="catalytic activity">
    <reaction evidence="1">
        <text>a plastoquinone + NADPH + (n+1) H(+)(in) = a plastoquinol + NADP(+) + n H(+)(out)</text>
        <dbReference type="Rhea" id="RHEA:42612"/>
        <dbReference type="Rhea" id="RHEA-COMP:9561"/>
        <dbReference type="Rhea" id="RHEA-COMP:9562"/>
        <dbReference type="ChEBI" id="CHEBI:15378"/>
        <dbReference type="ChEBI" id="CHEBI:17757"/>
        <dbReference type="ChEBI" id="CHEBI:57783"/>
        <dbReference type="ChEBI" id="CHEBI:58349"/>
        <dbReference type="ChEBI" id="CHEBI:62192"/>
    </reaction>
</comment>
<comment type="subunit">
    <text evidence="1">NDH-1 can be composed of about 15 different subunits; different subcomplexes with different compositions have been identified which probably have different functions.</text>
</comment>
<comment type="subcellular location">
    <subcellularLocation>
        <location evidence="1">Cellular thylakoid membrane</location>
        <topology evidence="1">Multi-pass membrane protein</topology>
    </subcellularLocation>
</comment>
<comment type="similarity">
    <text evidence="1">Belongs to the complex I subunit 3 family.</text>
</comment>
<comment type="sequence caution" evidence="2">
    <conflict type="erroneous initiation">
        <sequence resource="EMBL-CDS" id="BAD78560"/>
    </conflict>
</comment>
<sequence length="133" mass="15172">MAKWNSDCSLEFGVFVLNGYEYLLGFLLISSLVPILSLTASRLLRPGRRGPERRTTYESGMEPIGGAWIQFNVRYYMFALVFVIFDVETVFLYPWAVAFNRLGLLAFVEALIFITILVVGLAYAWRKGALEWS</sequence>
<feature type="chain" id="PRO_0000362787" description="NAD(P)H-quinone oxidoreductase subunit 3">
    <location>
        <begin position="1"/>
        <end position="133"/>
    </location>
</feature>
<feature type="transmembrane region" description="Helical" evidence="1">
    <location>
        <begin position="22"/>
        <end position="44"/>
    </location>
</feature>
<feature type="transmembrane region" description="Helical" evidence="1">
    <location>
        <begin position="77"/>
        <end position="97"/>
    </location>
</feature>
<feature type="transmembrane region" description="Helical" evidence="1">
    <location>
        <begin position="102"/>
        <end position="122"/>
    </location>
</feature>
<keyword id="KW-0472">Membrane</keyword>
<keyword id="KW-0520">NAD</keyword>
<keyword id="KW-0521">NADP</keyword>
<keyword id="KW-0618">Plastoquinone</keyword>
<keyword id="KW-0874">Quinone</keyword>
<keyword id="KW-0793">Thylakoid</keyword>
<keyword id="KW-1278">Translocase</keyword>
<keyword id="KW-0812">Transmembrane</keyword>
<keyword id="KW-1133">Transmembrane helix</keyword>
<keyword id="KW-0813">Transport</keyword>
<reference key="1">
    <citation type="journal article" date="2007" name="Photosyn. Res.">
        <title>Complete nucleotide sequence of the freshwater unicellular cyanobacterium Synechococcus elongatus PCC 6301 chromosome: gene content and organization.</title>
        <authorList>
            <person name="Sugita C."/>
            <person name="Ogata K."/>
            <person name="Shikata M."/>
            <person name="Jikuya H."/>
            <person name="Takano J."/>
            <person name="Furumichi M."/>
            <person name="Kanehisa M."/>
            <person name="Omata T."/>
            <person name="Sugiura M."/>
            <person name="Sugita M."/>
        </authorList>
    </citation>
    <scope>NUCLEOTIDE SEQUENCE [LARGE SCALE GENOMIC DNA]</scope>
    <source>
        <strain>ATCC 27144 / PCC 6301 / SAUG 1402/1</strain>
    </source>
</reference>
<protein>
    <recommendedName>
        <fullName evidence="1">NAD(P)H-quinone oxidoreductase subunit 3</fullName>
        <ecNumber evidence="1">7.1.1.-</ecNumber>
    </recommendedName>
    <alternativeName>
        <fullName evidence="1">NAD(P)H dehydrogenase subunit 3</fullName>
    </alternativeName>
    <alternativeName>
        <fullName evidence="1">NADH-plastoquinone oxidoreductase subunit 3</fullName>
    </alternativeName>
    <alternativeName>
        <fullName evidence="1">NDH-1 subunit 3</fullName>
        <shortName evidence="1">NDH-C</shortName>
    </alternativeName>
</protein>
<gene>
    <name evidence="1" type="primary">ndhC</name>
    <name type="ordered locus">syc0370_c</name>
</gene>